<feature type="chain" id="PRO_0000404254" description="Probable glutathione S-transferase">
    <location>
        <begin position="1"/>
        <end position="231"/>
    </location>
</feature>
<feature type="domain" description="GST N-terminal">
    <location>
        <begin position="4"/>
        <end position="96"/>
    </location>
</feature>
<feature type="domain" description="GST C-terminal">
    <location>
        <begin position="105"/>
        <end position="227"/>
    </location>
</feature>
<feature type="binding site" evidence="1">
    <location>
        <position position="14"/>
    </location>
    <ligand>
        <name>glutathione</name>
        <dbReference type="ChEBI" id="CHEBI:57925"/>
    </ligand>
</feature>
<feature type="binding site" evidence="1">
    <location>
        <position position="43"/>
    </location>
    <ligand>
        <name>glutathione</name>
        <dbReference type="ChEBI" id="CHEBI:57925"/>
    </ligand>
</feature>
<feature type="binding site" evidence="1">
    <location>
        <position position="57"/>
    </location>
    <ligand>
        <name>glutathione</name>
        <dbReference type="ChEBI" id="CHEBI:57925"/>
    </ligand>
</feature>
<feature type="binding site">
    <location>
        <begin position="80"/>
        <end position="81"/>
    </location>
    <ligand>
        <name>glutathione</name>
        <dbReference type="ChEBI" id="CHEBI:57925"/>
    </ligand>
</feature>
<feature type="binding site" evidence="1">
    <location>
        <position position="124"/>
    </location>
    <ligand>
        <name>glutathione</name>
        <dbReference type="ChEBI" id="CHEBI:57925"/>
    </ligand>
</feature>
<feature type="binding site">
    <location>
        <begin position="128"/>
        <end position="130"/>
    </location>
    <ligand>
        <name>glutathione</name>
        <dbReference type="ChEBI" id="CHEBI:57925"/>
    </ligand>
</feature>
<feature type="strand" evidence="5">
    <location>
        <begin position="5"/>
        <end position="10"/>
    </location>
</feature>
<feature type="helix" evidence="5">
    <location>
        <begin position="15"/>
        <end position="26"/>
    </location>
</feature>
<feature type="strand" evidence="5">
    <location>
        <begin position="32"/>
        <end position="35"/>
    </location>
</feature>
<feature type="helix" evidence="5">
    <location>
        <begin position="38"/>
        <end position="40"/>
    </location>
</feature>
<feature type="helix" evidence="5">
    <location>
        <begin position="42"/>
        <end position="44"/>
    </location>
</feature>
<feature type="helix" evidence="5">
    <location>
        <begin position="46"/>
        <end position="51"/>
    </location>
</feature>
<feature type="strand" evidence="4">
    <location>
        <begin position="53"/>
        <end position="55"/>
    </location>
</feature>
<feature type="strand" evidence="5">
    <location>
        <begin position="59"/>
        <end position="65"/>
    </location>
</feature>
<feature type="strand" evidence="5">
    <location>
        <begin position="68"/>
        <end position="70"/>
    </location>
</feature>
<feature type="strand" evidence="5">
    <location>
        <begin position="74"/>
        <end position="78"/>
    </location>
</feature>
<feature type="helix" evidence="5">
    <location>
        <begin position="81"/>
        <end position="91"/>
    </location>
</feature>
<feature type="helix" evidence="5">
    <location>
        <begin position="106"/>
        <end position="122"/>
    </location>
</feature>
<feature type="helix" evidence="5">
    <location>
        <begin position="125"/>
        <end position="127"/>
    </location>
</feature>
<feature type="helix" evidence="5">
    <location>
        <begin position="129"/>
        <end position="137"/>
    </location>
</feature>
<feature type="helix" evidence="5">
    <location>
        <begin position="142"/>
        <end position="164"/>
    </location>
</feature>
<feature type="strand" evidence="5">
    <location>
        <begin position="165"/>
        <end position="171"/>
    </location>
</feature>
<feature type="helix" evidence="5">
    <location>
        <begin position="176"/>
        <end position="190"/>
    </location>
</feature>
<feature type="helix" evidence="5">
    <location>
        <begin position="195"/>
        <end position="197"/>
    </location>
</feature>
<feature type="helix" evidence="5">
    <location>
        <begin position="199"/>
        <end position="209"/>
    </location>
</feature>
<feature type="helix" evidence="5">
    <location>
        <begin position="212"/>
        <end position="216"/>
    </location>
</feature>
<feature type="helix" evidence="5">
    <location>
        <begin position="219"/>
        <end position="221"/>
    </location>
</feature>
<feature type="helix" evidence="5">
    <location>
        <begin position="227"/>
        <end position="229"/>
    </location>
</feature>
<comment type="function">
    <text>Probable glutathione S-transferase.</text>
</comment>
<comment type="catalytic activity">
    <reaction>
        <text>RX + glutathione = an S-substituted glutathione + a halide anion + H(+)</text>
        <dbReference type="Rhea" id="RHEA:16437"/>
        <dbReference type="ChEBI" id="CHEBI:15378"/>
        <dbReference type="ChEBI" id="CHEBI:16042"/>
        <dbReference type="ChEBI" id="CHEBI:17792"/>
        <dbReference type="ChEBI" id="CHEBI:57925"/>
        <dbReference type="ChEBI" id="CHEBI:90779"/>
        <dbReference type="EC" id="2.5.1.18"/>
    </reaction>
</comment>
<comment type="subunit">
    <text evidence="3">Homodimer.</text>
</comment>
<comment type="similarity">
    <text evidence="2">Belongs to the GST superfamily. Zeta family.</text>
</comment>
<reference key="1">
    <citation type="journal article" date="2009" name="Genome Res.">
        <title>Comparative genomic analyses of the human fungal pathogens Coccidioides and their relatives.</title>
        <authorList>
            <person name="Sharpton T.J."/>
            <person name="Stajich J.E."/>
            <person name="Rounsley S.D."/>
            <person name="Gardner M.J."/>
            <person name="Wortman J.R."/>
            <person name="Jordar V.S."/>
            <person name="Maiti R."/>
            <person name="Kodira C.D."/>
            <person name="Neafsey D.E."/>
            <person name="Zeng Q."/>
            <person name="Hung C.-Y."/>
            <person name="McMahan C."/>
            <person name="Muszewska A."/>
            <person name="Grynberg M."/>
            <person name="Mandel M.A."/>
            <person name="Kellner E.M."/>
            <person name="Barker B.M."/>
            <person name="Galgiani J.N."/>
            <person name="Orbach M.J."/>
            <person name="Kirkland T.N."/>
            <person name="Cole G.T."/>
            <person name="Henn M.R."/>
            <person name="Birren B.W."/>
            <person name="Taylor J.W."/>
        </authorList>
    </citation>
    <scope>NUCLEOTIDE SEQUENCE [LARGE SCALE GENOMIC DNA]</scope>
    <source>
        <strain>RS</strain>
    </source>
</reference>
<reference key="2">
    <citation type="journal article" date="2010" name="Genome Res.">
        <title>Population genomic sequencing of Coccidioides fungi reveals recent hybridization and transposon control.</title>
        <authorList>
            <person name="Neafsey D.E."/>
            <person name="Barker B.M."/>
            <person name="Sharpton T.J."/>
            <person name="Stajich J.E."/>
            <person name="Park D.J."/>
            <person name="Whiston E."/>
            <person name="Hung C.-Y."/>
            <person name="McMahan C."/>
            <person name="White J."/>
            <person name="Sykes S."/>
            <person name="Heiman D."/>
            <person name="Young S."/>
            <person name="Zeng Q."/>
            <person name="Abouelleil A."/>
            <person name="Aftuck L."/>
            <person name="Bessette D."/>
            <person name="Brown A."/>
            <person name="FitzGerald M."/>
            <person name="Lui A."/>
            <person name="Macdonald J.P."/>
            <person name="Priest M."/>
            <person name="Orbach M.J."/>
            <person name="Galgiani J.N."/>
            <person name="Kirkland T.N."/>
            <person name="Cole G.T."/>
            <person name="Birren B.W."/>
            <person name="Henn M.R."/>
            <person name="Taylor J.W."/>
            <person name="Rounsley S.D."/>
        </authorList>
    </citation>
    <scope>GENOME REANNOTATION</scope>
    <source>
        <strain>RS</strain>
    </source>
</reference>
<reference key="3">
    <citation type="submission" date="2010-06" db="PDB data bank">
        <title>Crystal structure of putative glutathione transferase from Coccidioides immitis bound to glutathione.</title>
        <authorList>
            <consortium name="Seattle structural genomics center for infectious disease (SSGCID)"/>
        </authorList>
    </citation>
    <scope>X-RAY CRYSTALLOGRAPHY (1.85 ANGSTROMS) IN COMPLEX WITH GLUTATHIONE</scope>
    <source>
        <strain>RS</strain>
    </source>
</reference>
<proteinExistence type="evidence at protein level"/>
<organism>
    <name type="scientific">Coccidioides immitis (strain RS)</name>
    <name type="common">Valley fever fungus</name>
    <dbReference type="NCBI Taxonomy" id="246410"/>
    <lineage>
        <taxon>Eukaryota</taxon>
        <taxon>Fungi</taxon>
        <taxon>Dikarya</taxon>
        <taxon>Ascomycota</taxon>
        <taxon>Pezizomycotina</taxon>
        <taxon>Eurotiomycetes</taxon>
        <taxon>Eurotiomycetidae</taxon>
        <taxon>Onygenales</taxon>
        <taxon>Onygenaceae</taxon>
        <taxon>Coccidioides</taxon>
    </lineage>
</organism>
<protein>
    <recommendedName>
        <fullName>Probable glutathione S-transferase</fullName>
        <ecNumber>2.5.1.18</ecNumber>
    </recommendedName>
</protein>
<sequence length="231" mass="25585">MTTPNFELYGYFRSSCSGRLRIAFHLKSIPYTRHPVNLLKGEQHSDTYKSLNPTNTVPLLVVSNINNTVSPSSASFSIGQSLAALEYLEEALPTNARPLLPPISNPVARAHVRTICNIIACDVQPVTNLKIQKKVKALDGDPTVWSRDLATQGFGAVEKLLELSAGRFCVGDEITLADVCLVPAVWAAERVGMDLARFPITKRVFEEMLKEEAVQKAHWQKQEDTPEDLRA</sequence>
<keyword id="KW-0002">3D-structure</keyword>
<keyword id="KW-1185">Reference proteome</keyword>
<keyword id="KW-0808">Transferase</keyword>
<accession>D2YW48</accession>
<accession>J3KIY1</accession>
<accession>J3KJ57</accession>
<gene>
    <name type="ORF">CIMG_01314</name>
</gene>
<dbReference type="EC" id="2.5.1.18"/>
<dbReference type="EMBL" id="GG704911">
    <property type="protein sequence ID" value="EAS35960.3"/>
    <property type="molecule type" value="Genomic_DNA"/>
</dbReference>
<dbReference type="RefSeq" id="XP_001247543.1">
    <property type="nucleotide sequence ID" value="XM_001247542.2"/>
</dbReference>
<dbReference type="PDB" id="3LG6">
    <property type="method" value="X-ray"/>
    <property type="resolution" value="2.20 A"/>
    <property type="chains" value="A/B/C/D=1-231"/>
</dbReference>
<dbReference type="PDB" id="3N5O">
    <property type="method" value="X-ray"/>
    <property type="resolution" value="1.85 A"/>
    <property type="chains" value="A/B=1-231"/>
</dbReference>
<dbReference type="PDBsum" id="3LG6"/>
<dbReference type="PDBsum" id="3N5O"/>
<dbReference type="SMR" id="D2YW48"/>
<dbReference type="STRING" id="246410.D2YW48"/>
<dbReference type="GeneID" id="4567107"/>
<dbReference type="KEGG" id="cim:CIMG_01314"/>
<dbReference type="VEuPathDB" id="FungiDB:CIMG_01314"/>
<dbReference type="InParanoid" id="D2YW48"/>
<dbReference type="OMA" id="VYNAHRF"/>
<dbReference type="OrthoDB" id="202840at2759"/>
<dbReference type="EvolutionaryTrace" id="D2YW48"/>
<dbReference type="Proteomes" id="UP000001261">
    <property type="component" value="Unassembled WGS sequence"/>
</dbReference>
<dbReference type="GO" id="GO:0005739">
    <property type="term" value="C:mitochondrion"/>
    <property type="evidence" value="ECO:0007669"/>
    <property type="project" value="TreeGrafter"/>
</dbReference>
<dbReference type="GO" id="GO:0004364">
    <property type="term" value="F:glutathione transferase activity"/>
    <property type="evidence" value="ECO:0007669"/>
    <property type="project" value="UniProtKB-EC"/>
</dbReference>
<dbReference type="GO" id="GO:0016034">
    <property type="term" value="F:maleylacetoacetate isomerase activity"/>
    <property type="evidence" value="ECO:0007669"/>
    <property type="project" value="TreeGrafter"/>
</dbReference>
<dbReference type="GO" id="GO:0006749">
    <property type="term" value="P:glutathione metabolic process"/>
    <property type="evidence" value="ECO:0007669"/>
    <property type="project" value="TreeGrafter"/>
</dbReference>
<dbReference type="GO" id="GO:0006559">
    <property type="term" value="P:L-phenylalanine catabolic process"/>
    <property type="evidence" value="ECO:0007669"/>
    <property type="project" value="TreeGrafter"/>
</dbReference>
<dbReference type="CDD" id="cd03191">
    <property type="entry name" value="GST_C_Zeta"/>
    <property type="match status" value="1"/>
</dbReference>
<dbReference type="FunFam" id="1.20.1050.10:FF:000010">
    <property type="entry name" value="Maleylacetoacetate isomerase isoform 1"/>
    <property type="match status" value="1"/>
</dbReference>
<dbReference type="Gene3D" id="1.20.1050.10">
    <property type="match status" value="1"/>
</dbReference>
<dbReference type="Gene3D" id="3.40.30.10">
    <property type="entry name" value="Glutaredoxin"/>
    <property type="match status" value="1"/>
</dbReference>
<dbReference type="InterPro" id="IPR010987">
    <property type="entry name" value="Glutathione-S-Trfase_C-like"/>
</dbReference>
<dbReference type="InterPro" id="IPR036282">
    <property type="entry name" value="Glutathione-S-Trfase_C_sf"/>
</dbReference>
<dbReference type="InterPro" id="IPR040079">
    <property type="entry name" value="Glutathione_S-Trfase"/>
</dbReference>
<dbReference type="InterPro" id="IPR004045">
    <property type="entry name" value="Glutathione_S-Trfase_N"/>
</dbReference>
<dbReference type="InterPro" id="IPR004046">
    <property type="entry name" value="GST_C"/>
</dbReference>
<dbReference type="InterPro" id="IPR005955">
    <property type="entry name" value="GST_Zeta"/>
</dbReference>
<dbReference type="InterPro" id="IPR034330">
    <property type="entry name" value="GST_Zeta_C"/>
</dbReference>
<dbReference type="InterPro" id="IPR036249">
    <property type="entry name" value="Thioredoxin-like_sf"/>
</dbReference>
<dbReference type="NCBIfam" id="TIGR01262">
    <property type="entry name" value="maiA"/>
    <property type="match status" value="1"/>
</dbReference>
<dbReference type="PANTHER" id="PTHR42673">
    <property type="entry name" value="MALEYLACETOACETATE ISOMERASE"/>
    <property type="match status" value="1"/>
</dbReference>
<dbReference type="PANTHER" id="PTHR42673:SF4">
    <property type="entry name" value="MALEYLACETOACETATE ISOMERASE"/>
    <property type="match status" value="1"/>
</dbReference>
<dbReference type="Pfam" id="PF00043">
    <property type="entry name" value="GST_C"/>
    <property type="match status" value="1"/>
</dbReference>
<dbReference type="Pfam" id="PF13409">
    <property type="entry name" value="GST_N_2"/>
    <property type="match status" value="1"/>
</dbReference>
<dbReference type="SFLD" id="SFLDS00019">
    <property type="entry name" value="Glutathione_Transferase_(cytos"/>
    <property type="match status" value="1"/>
</dbReference>
<dbReference type="SFLD" id="SFLDG00358">
    <property type="entry name" value="Main_(cytGST)"/>
    <property type="match status" value="1"/>
</dbReference>
<dbReference type="SUPFAM" id="SSF47616">
    <property type="entry name" value="GST C-terminal domain-like"/>
    <property type="match status" value="1"/>
</dbReference>
<dbReference type="SUPFAM" id="SSF52833">
    <property type="entry name" value="Thioredoxin-like"/>
    <property type="match status" value="1"/>
</dbReference>
<dbReference type="PROSITE" id="PS50405">
    <property type="entry name" value="GST_CTER"/>
    <property type="match status" value="1"/>
</dbReference>
<dbReference type="PROSITE" id="PS50404">
    <property type="entry name" value="GST_NTER"/>
    <property type="match status" value="1"/>
</dbReference>
<name>GST_COCIM</name>
<evidence type="ECO:0000269" key="1">
    <source ref="3"/>
</evidence>
<evidence type="ECO:0000305" key="2"/>
<evidence type="ECO:0000305" key="3">
    <source ref="3"/>
</evidence>
<evidence type="ECO:0007829" key="4">
    <source>
        <dbReference type="PDB" id="3LG6"/>
    </source>
</evidence>
<evidence type="ECO:0007829" key="5">
    <source>
        <dbReference type="PDB" id="3N5O"/>
    </source>
</evidence>